<keyword id="KW-0067">ATP-binding</keyword>
<keyword id="KW-0963">Cytoplasm</keyword>
<keyword id="KW-0227">DNA damage</keyword>
<keyword id="KW-0233">DNA recombination</keyword>
<keyword id="KW-0234">DNA repair</keyword>
<keyword id="KW-0238">DNA-binding</keyword>
<keyword id="KW-0378">Hydrolase</keyword>
<keyword id="KW-0547">Nucleotide-binding</keyword>
<organism>
    <name type="scientific">Streptococcus pneumoniae (strain Hungary19A-6)</name>
    <dbReference type="NCBI Taxonomy" id="487214"/>
    <lineage>
        <taxon>Bacteria</taxon>
        <taxon>Bacillati</taxon>
        <taxon>Bacillota</taxon>
        <taxon>Bacilli</taxon>
        <taxon>Lactobacillales</taxon>
        <taxon>Streptococcaceae</taxon>
        <taxon>Streptococcus</taxon>
    </lineage>
</organism>
<sequence length="332" mass="37289">MSRILDNEIMGDEELVERTLRPQYLREYIGQDKVKDQLQIFIEAAKMRDEALDHVLLFGPPGLGKTTMAFVIANELGVNLKQTSGPVIEKAGDLVAILNELEPGDVLFIDEIHRLPMSVEEVLYSAMEDFYIDIMIGAGEGSRSVHLELPPFTLIGATTRAGMLSNPLRARFGITGHMEYYAHADLTEIVERTADIFEMEITHEAASELALRSRGTPRIANRLLKRVRDFAQIMGNGVIDDIITDKALTMLDVDHEGLDYVDQKILRTMIEMYSGGPVGLGTLSVNIAEERETVEDMYEPYLIQKGFIMRTRSGRVATAKAYEHLGYEYSEK</sequence>
<feature type="chain" id="PRO_1000089684" description="Holliday junction branch migration complex subunit RuvB">
    <location>
        <begin position="1"/>
        <end position="332"/>
    </location>
</feature>
<feature type="region of interest" description="Large ATPase domain (RuvB-L)" evidence="1">
    <location>
        <begin position="1"/>
        <end position="181"/>
    </location>
</feature>
<feature type="region of interest" description="Small ATPAse domain (RuvB-S)" evidence="1">
    <location>
        <begin position="182"/>
        <end position="252"/>
    </location>
</feature>
<feature type="region of interest" description="Head domain (RuvB-H)" evidence="1">
    <location>
        <begin position="255"/>
        <end position="332"/>
    </location>
</feature>
<feature type="binding site" evidence="1">
    <location>
        <position position="20"/>
    </location>
    <ligand>
        <name>ATP</name>
        <dbReference type="ChEBI" id="CHEBI:30616"/>
    </ligand>
</feature>
<feature type="binding site" evidence="1">
    <location>
        <position position="21"/>
    </location>
    <ligand>
        <name>ATP</name>
        <dbReference type="ChEBI" id="CHEBI:30616"/>
    </ligand>
</feature>
<feature type="binding site" evidence="1">
    <location>
        <position position="62"/>
    </location>
    <ligand>
        <name>ATP</name>
        <dbReference type="ChEBI" id="CHEBI:30616"/>
    </ligand>
</feature>
<feature type="binding site" evidence="1">
    <location>
        <position position="65"/>
    </location>
    <ligand>
        <name>ATP</name>
        <dbReference type="ChEBI" id="CHEBI:30616"/>
    </ligand>
</feature>
<feature type="binding site" evidence="1">
    <location>
        <position position="66"/>
    </location>
    <ligand>
        <name>ATP</name>
        <dbReference type="ChEBI" id="CHEBI:30616"/>
    </ligand>
</feature>
<feature type="binding site" evidence="1">
    <location>
        <position position="66"/>
    </location>
    <ligand>
        <name>Mg(2+)</name>
        <dbReference type="ChEBI" id="CHEBI:18420"/>
    </ligand>
</feature>
<feature type="binding site" evidence="1">
    <location>
        <position position="67"/>
    </location>
    <ligand>
        <name>ATP</name>
        <dbReference type="ChEBI" id="CHEBI:30616"/>
    </ligand>
</feature>
<feature type="binding site" evidence="1">
    <location>
        <begin position="128"/>
        <end position="130"/>
    </location>
    <ligand>
        <name>ATP</name>
        <dbReference type="ChEBI" id="CHEBI:30616"/>
    </ligand>
</feature>
<feature type="binding site" evidence="1">
    <location>
        <position position="171"/>
    </location>
    <ligand>
        <name>ATP</name>
        <dbReference type="ChEBI" id="CHEBI:30616"/>
    </ligand>
</feature>
<feature type="binding site" evidence="1">
    <location>
        <position position="181"/>
    </location>
    <ligand>
        <name>ATP</name>
        <dbReference type="ChEBI" id="CHEBI:30616"/>
    </ligand>
</feature>
<feature type="binding site" evidence="1">
    <location>
        <position position="218"/>
    </location>
    <ligand>
        <name>ATP</name>
        <dbReference type="ChEBI" id="CHEBI:30616"/>
    </ligand>
</feature>
<feature type="binding site" evidence="1">
    <location>
        <position position="291"/>
    </location>
    <ligand>
        <name>DNA</name>
        <dbReference type="ChEBI" id="CHEBI:16991"/>
    </ligand>
</feature>
<feature type="binding site" evidence="1">
    <location>
        <position position="310"/>
    </location>
    <ligand>
        <name>DNA</name>
        <dbReference type="ChEBI" id="CHEBI:16991"/>
    </ligand>
</feature>
<feature type="binding site" evidence="1">
    <location>
        <position position="312"/>
    </location>
    <ligand>
        <name>DNA</name>
        <dbReference type="ChEBI" id="CHEBI:16991"/>
    </ligand>
</feature>
<feature type="binding site" evidence="1">
    <location>
        <position position="315"/>
    </location>
    <ligand>
        <name>DNA</name>
        <dbReference type="ChEBI" id="CHEBI:16991"/>
    </ligand>
</feature>
<name>RUVB_STRPI</name>
<evidence type="ECO:0000255" key="1">
    <source>
        <dbReference type="HAMAP-Rule" id="MF_00016"/>
    </source>
</evidence>
<proteinExistence type="inferred from homology"/>
<comment type="function">
    <text evidence="1">The RuvA-RuvB-RuvC complex processes Holliday junction (HJ) DNA during genetic recombination and DNA repair, while the RuvA-RuvB complex plays an important role in the rescue of blocked DNA replication forks via replication fork reversal (RFR). RuvA specifically binds to HJ cruciform DNA, conferring on it an open structure. The RuvB hexamer acts as an ATP-dependent pump, pulling dsDNA into and through the RuvAB complex. RuvB forms 2 homohexamers on either side of HJ DNA bound by 1 or 2 RuvA tetramers; 4 subunits per hexamer contact DNA at a time. Coordinated motions by a converter formed by DNA-disengaged RuvB subunits stimulates ATP hydrolysis and nucleotide exchange. Immobilization of the converter enables RuvB to convert the ATP-contained energy into a lever motion, pulling 2 nucleotides of DNA out of the RuvA tetramer per ATP hydrolyzed, thus driving DNA branch migration. The RuvB motors rotate together with the DNA substrate, which together with the progressing nucleotide cycle form the mechanistic basis for DNA recombination by continuous HJ branch migration. Branch migration allows RuvC to scan DNA until it finds its consensus sequence, where it cleaves and resolves cruciform DNA.</text>
</comment>
<comment type="catalytic activity">
    <reaction evidence="1">
        <text>ATP + H2O = ADP + phosphate + H(+)</text>
        <dbReference type="Rhea" id="RHEA:13065"/>
        <dbReference type="ChEBI" id="CHEBI:15377"/>
        <dbReference type="ChEBI" id="CHEBI:15378"/>
        <dbReference type="ChEBI" id="CHEBI:30616"/>
        <dbReference type="ChEBI" id="CHEBI:43474"/>
        <dbReference type="ChEBI" id="CHEBI:456216"/>
    </reaction>
</comment>
<comment type="subunit">
    <text evidence="1">Homohexamer. Forms an RuvA(8)-RuvB(12)-Holliday junction (HJ) complex. HJ DNA is sandwiched between 2 RuvA tetramers; dsDNA enters through RuvA and exits via RuvB. An RuvB hexamer assembles on each DNA strand where it exits the tetramer. Each RuvB hexamer is contacted by two RuvA subunits (via domain III) on 2 adjacent RuvB subunits; this complex drives branch migration. In the full resolvosome a probable DNA-RuvA(4)-RuvB(12)-RuvC(2) complex forms which resolves the HJ.</text>
</comment>
<comment type="subcellular location">
    <subcellularLocation>
        <location evidence="1">Cytoplasm</location>
    </subcellularLocation>
</comment>
<comment type="domain">
    <text evidence="1">Has 3 domains, the large (RuvB-L) and small ATPase (RuvB-S) domains and the C-terminal head (RuvB-H) domain. The head domain binds DNA, while the ATPase domains jointly bind ATP, ADP or are empty depending on the state of the subunit in the translocation cycle. During a single DNA translocation step the structure of each domain remains the same, but their relative positions change.</text>
</comment>
<comment type="similarity">
    <text evidence="1">Belongs to the RuvB family.</text>
</comment>
<gene>
    <name evidence="1" type="primary">ruvB</name>
    <name type="ordered locus">SPH_0376</name>
</gene>
<protein>
    <recommendedName>
        <fullName evidence="1">Holliday junction branch migration complex subunit RuvB</fullName>
        <ecNumber evidence="1">3.6.4.-</ecNumber>
    </recommendedName>
</protein>
<reference key="1">
    <citation type="journal article" date="2010" name="Genome Biol.">
        <title>Structure and dynamics of the pan-genome of Streptococcus pneumoniae and closely related species.</title>
        <authorList>
            <person name="Donati C."/>
            <person name="Hiller N.L."/>
            <person name="Tettelin H."/>
            <person name="Muzzi A."/>
            <person name="Croucher N.J."/>
            <person name="Angiuoli S.V."/>
            <person name="Oggioni M."/>
            <person name="Dunning Hotopp J.C."/>
            <person name="Hu F.Z."/>
            <person name="Riley D.R."/>
            <person name="Covacci A."/>
            <person name="Mitchell T.J."/>
            <person name="Bentley S.D."/>
            <person name="Kilian M."/>
            <person name="Ehrlich G.D."/>
            <person name="Rappuoli R."/>
            <person name="Moxon E.R."/>
            <person name="Masignani V."/>
        </authorList>
    </citation>
    <scope>NUCLEOTIDE SEQUENCE [LARGE SCALE GENOMIC DNA]</scope>
    <source>
        <strain>Hungary19A-6</strain>
    </source>
</reference>
<accession>B1I8Y6</accession>
<dbReference type="EC" id="3.6.4.-" evidence="1"/>
<dbReference type="EMBL" id="CP000936">
    <property type="protein sequence ID" value="ACA37135.1"/>
    <property type="molecule type" value="Genomic_DNA"/>
</dbReference>
<dbReference type="RefSeq" id="WP_001809468.1">
    <property type="nucleotide sequence ID" value="NC_010380.1"/>
</dbReference>
<dbReference type="SMR" id="B1I8Y6"/>
<dbReference type="GeneID" id="45652263"/>
<dbReference type="KEGG" id="spv:SPH_0376"/>
<dbReference type="HOGENOM" id="CLU_055599_1_0_9"/>
<dbReference type="Proteomes" id="UP000002163">
    <property type="component" value="Chromosome"/>
</dbReference>
<dbReference type="GO" id="GO:0005737">
    <property type="term" value="C:cytoplasm"/>
    <property type="evidence" value="ECO:0007669"/>
    <property type="project" value="UniProtKB-SubCell"/>
</dbReference>
<dbReference type="GO" id="GO:0048476">
    <property type="term" value="C:Holliday junction resolvase complex"/>
    <property type="evidence" value="ECO:0007669"/>
    <property type="project" value="UniProtKB-UniRule"/>
</dbReference>
<dbReference type="GO" id="GO:0005524">
    <property type="term" value="F:ATP binding"/>
    <property type="evidence" value="ECO:0007669"/>
    <property type="project" value="UniProtKB-UniRule"/>
</dbReference>
<dbReference type="GO" id="GO:0016887">
    <property type="term" value="F:ATP hydrolysis activity"/>
    <property type="evidence" value="ECO:0007669"/>
    <property type="project" value="InterPro"/>
</dbReference>
<dbReference type="GO" id="GO:0000400">
    <property type="term" value="F:four-way junction DNA binding"/>
    <property type="evidence" value="ECO:0007669"/>
    <property type="project" value="UniProtKB-UniRule"/>
</dbReference>
<dbReference type="GO" id="GO:0009378">
    <property type="term" value="F:four-way junction helicase activity"/>
    <property type="evidence" value="ECO:0007669"/>
    <property type="project" value="InterPro"/>
</dbReference>
<dbReference type="GO" id="GO:0006310">
    <property type="term" value="P:DNA recombination"/>
    <property type="evidence" value="ECO:0007669"/>
    <property type="project" value="UniProtKB-UniRule"/>
</dbReference>
<dbReference type="GO" id="GO:0006281">
    <property type="term" value="P:DNA repair"/>
    <property type="evidence" value="ECO:0007669"/>
    <property type="project" value="UniProtKB-UniRule"/>
</dbReference>
<dbReference type="CDD" id="cd00009">
    <property type="entry name" value="AAA"/>
    <property type="match status" value="1"/>
</dbReference>
<dbReference type="Gene3D" id="1.10.8.60">
    <property type="match status" value="1"/>
</dbReference>
<dbReference type="Gene3D" id="3.40.50.300">
    <property type="entry name" value="P-loop containing nucleotide triphosphate hydrolases"/>
    <property type="match status" value="1"/>
</dbReference>
<dbReference type="Gene3D" id="1.10.10.10">
    <property type="entry name" value="Winged helix-like DNA-binding domain superfamily/Winged helix DNA-binding domain"/>
    <property type="match status" value="1"/>
</dbReference>
<dbReference type="HAMAP" id="MF_00016">
    <property type="entry name" value="DNA_HJ_migration_RuvB"/>
    <property type="match status" value="1"/>
</dbReference>
<dbReference type="InterPro" id="IPR003593">
    <property type="entry name" value="AAA+_ATPase"/>
</dbReference>
<dbReference type="InterPro" id="IPR041445">
    <property type="entry name" value="AAA_lid_4"/>
</dbReference>
<dbReference type="InterPro" id="IPR004605">
    <property type="entry name" value="DNA_helicase_Holl-junc_RuvB"/>
</dbReference>
<dbReference type="InterPro" id="IPR027417">
    <property type="entry name" value="P-loop_NTPase"/>
</dbReference>
<dbReference type="InterPro" id="IPR008824">
    <property type="entry name" value="RuvB-like_N"/>
</dbReference>
<dbReference type="InterPro" id="IPR008823">
    <property type="entry name" value="RuvB_C"/>
</dbReference>
<dbReference type="InterPro" id="IPR036388">
    <property type="entry name" value="WH-like_DNA-bd_sf"/>
</dbReference>
<dbReference type="InterPro" id="IPR036390">
    <property type="entry name" value="WH_DNA-bd_sf"/>
</dbReference>
<dbReference type="NCBIfam" id="NF000868">
    <property type="entry name" value="PRK00080.1"/>
    <property type="match status" value="1"/>
</dbReference>
<dbReference type="NCBIfam" id="TIGR00635">
    <property type="entry name" value="ruvB"/>
    <property type="match status" value="1"/>
</dbReference>
<dbReference type="PANTHER" id="PTHR42848">
    <property type="match status" value="1"/>
</dbReference>
<dbReference type="PANTHER" id="PTHR42848:SF1">
    <property type="entry name" value="HOLLIDAY JUNCTION BRANCH MIGRATION COMPLEX SUBUNIT RUVB"/>
    <property type="match status" value="1"/>
</dbReference>
<dbReference type="Pfam" id="PF17864">
    <property type="entry name" value="AAA_lid_4"/>
    <property type="match status" value="1"/>
</dbReference>
<dbReference type="Pfam" id="PF05491">
    <property type="entry name" value="RuvB_C"/>
    <property type="match status" value="1"/>
</dbReference>
<dbReference type="Pfam" id="PF05496">
    <property type="entry name" value="RuvB_N"/>
    <property type="match status" value="1"/>
</dbReference>
<dbReference type="SMART" id="SM00382">
    <property type="entry name" value="AAA"/>
    <property type="match status" value="1"/>
</dbReference>
<dbReference type="SUPFAM" id="SSF52540">
    <property type="entry name" value="P-loop containing nucleoside triphosphate hydrolases"/>
    <property type="match status" value="1"/>
</dbReference>
<dbReference type="SUPFAM" id="SSF46785">
    <property type="entry name" value="Winged helix' DNA-binding domain"/>
    <property type="match status" value="1"/>
</dbReference>